<protein>
    <recommendedName>
        <fullName>U3-lycotoxin-Ls1j</fullName>
    </recommendedName>
    <alternativeName>
        <fullName>Toxin-like structure LSTX-B24</fullName>
    </alternativeName>
</protein>
<feature type="signal peptide" evidence="2">
    <location>
        <begin position="1"/>
        <end position="20"/>
    </location>
</feature>
<feature type="propeptide" id="PRO_0000401653" evidence="1">
    <location>
        <begin position="21"/>
        <end position="44"/>
    </location>
</feature>
<feature type="chain" id="PRO_0000401654" description="U3-lycotoxin-Ls1j">
    <location>
        <begin position="45"/>
        <end position="115"/>
    </location>
</feature>
<feature type="disulfide bond" evidence="1">
    <location>
        <begin position="48"/>
        <end position="63"/>
    </location>
</feature>
<feature type="disulfide bond" evidence="1">
    <location>
        <begin position="55"/>
        <end position="72"/>
    </location>
</feature>
<feature type="disulfide bond" evidence="1">
    <location>
        <begin position="62"/>
        <end position="87"/>
    </location>
</feature>
<feature type="disulfide bond" evidence="1">
    <location>
        <begin position="74"/>
        <end position="85"/>
    </location>
</feature>
<proteinExistence type="evidence at transcript level"/>
<name>TX324_LYCSI</name>
<reference key="1">
    <citation type="journal article" date="2010" name="Zoology">
        <title>Transcriptome analysis of the venom glands of the Chinese wolf spider Lycosa singoriensis.</title>
        <authorList>
            <person name="Zhang Y."/>
            <person name="Chen J."/>
            <person name="Tang X."/>
            <person name="Wang F."/>
            <person name="Jiang L."/>
            <person name="Xiong X."/>
            <person name="Wang M."/>
            <person name="Rong M."/>
            <person name="Liu Z."/>
            <person name="Liang S."/>
        </authorList>
    </citation>
    <scope>NUCLEOTIDE SEQUENCE [LARGE SCALE MRNA]</scope>
    <source>
        <tissue>Venom gland</tissue>
    </source>
</reference>
<dbReference type="EMBL" id="EU926003">
    <property type="protein sequence ID" value="ACI41335.1"/>
    <property type="molecule type" value="mRNA"/>
</dbReference>
<dbReference type="EMBL" id="FM864007">
    <property type="protein sequence ID" value="CAS03605.1"/>
    <property type="molecule type" value="mRNA"/>
</dbReference>
<dbReference type="SMR" id="B6DCR9"/>
<dbReference type="ArachnoServer" id="AS000952">
    <property type="toxin name" value="U3-lycotoxin-Ls1j"/>
</dbReference>
<dbReference type="GO" id="GO:0005576">
    <property type="term" value="C:extracellular region"/>
    <property type="evidence" value="ECO:0007669"/>
    <property type="project" value="UniProtKB-SubCell"/>
</dbReference>
<dbReference type="GO" id="GO:0090729">
    <property type="term" value="F:toxin activity"/>
    <property type="evidence" value="ECO:0007669"/>
    <property type="project" value="UniProtKB-KW"/>
</dbReference>
<dbReference type="InterPro" id="IPR019553">
    <property type="entry name" value="Spider_toxin_CSTX_knottin"/>
</dbReference>
<dbReference type="InterPro" id="IPR011142">
    <property type="entry name" value="Spider_toxin_CSTX_Knottin_CS"/>
</dbReference>
<dbReference type="Pfam" id="PF10530">
    <property type="entry name" value="Toxin_35"/>
    <property type="match status" value="1"/>
</dbReference>
<dbReference type="PROSITE" id="PS60029">
    <property type="entry name" value="SPIDER_CSTX"/>
    <property type="match status" value="1"/>
</dbReference>
<evidence type="ECO:0000250" key="1"/>
<evidence type="ECO:0000255" key="2"/>
<evidence type="ECO:0000305" key="3"/>
<accession>B6DCR9</accession>
<keyword id="KW-1015">Disulfide bond</keyword>
<keyword id="KW-0960">Knottin</keyword>
<keyword id="KW-0964">Secreted</keyword>
<keyword id="KW-0732">Signal</keyword>
<keyword id="KW-0800">Toxin</keyword>
<organism>
    <name type="scientific">Lycosa singoriensis</name>
    <name type="common">Wolf spider</name>
    <name type="synonym">Aranea singoriensis</name>
    <dbReference type="NCBI Taxonomy" id="434756"/>
    <lineage>
        <taxon>Eukaryota</taxon>
        <taxon>Metazoa</taxon>
        <taxon>Ecdysozoa</taxon>
        <taxon>Arthropoda</taxon>
        <taxon>Chelicerata</taxon>
        <taxon>Arachnida</taxon>
        <taxon>Araneae</taxon>
        <taxon>Araneomorphae</taxon>
        <taxon>Entelegynae</taxon>
        <taxon>Lycosoidea</taxon>
        <taxon>Lycosidae</taxon>
        <taxon>Lycosa</taxon>
    </lineage>
</organism>
<sequence length="115" mass="13202">MKFVLLFGVFLVTLFSYSSAEMLDDFDQADEDELLSLIEKEEARAKECTPRFYDCSHDRHSCCRSELFKGVCTCFYPEGGDNEVCTCQQPKHLKYMEKAAGKAKKFGGKIKKWFG</sequence>
<comment type="subcellular location">
    <subcellularLocation>
        <location evidence="1">Secreted</location>
    </subcellularLocation>
</comment>
<comment type="tissue specificity">
    <text>Expressed by the venom gland.</text>
</comment>
<comment type="domain">
    <text evidence="1">The presence of a 'disulfide through disulfide knot' structurally defines this protein as a knottin.</text>
</comment>
<comment type="similarity">
    <text evidence="3">Belongs to the neurotoxin 19 (CSTX) family. 01 subfamily.</text>
</comment>